<protein>
    <recommendedName>
        <fullName evidence="1">Protein-methionine-sulfoxide reductase catalytic subunit MsrP</fullName>
        <ecNumber evidence="1">1.8.5.-</ecNumber>
    </recommendedName>
</protein>
<proteinExistence type="inferred from homology"/>
<feature type="signal peptide" description="Tat-type signal" evidence="1">
    <location>
        <begin position="1"/>
        <end position="42"/>
    </location>
</feature>
<feature type="chain" id="PRO_1000066160" description="Protein-methionine-sulfoxide reductase catalytic subunit MsrP" evidence="1">
    <location>
        <begin position="43"/>
        <end position="312"/>
    </location>
</feature>
<feature type="binding site" evidence="1">
    <location>
        <position position="68"/>
    </location>
    <ligand>
        <name>Mo-molybdopterin</name>
        <dbReference type="ChEBI" id="CHEBI:71302"/>
    </ligand>
</feature>
<feature type="binding site" evidence="1">
    <location>
        <begin position="71"/>
        <end position="72"/>
    </location>
    <ligand>
        <name>Mo-molybdopterin</name>
        <dbReference type="ChEBI" id="CHEBI:71302"/>
    </ligand>
</feature>
<feature type="binding site" evidence="1">
    <location>
        <position position="126"/>
    </location>
    <ligand>
        <name>Mo-molybdopterin</name>
        <dbReference type="ChEBI" id="CHEBI:71302"/>
    </ligand>
    <ligandPart>
        <name>Mo</name>
        <dbReference type="ChEBI" id="CHEBI:28685"/>
    </ligandPart>
</feature>
<feature type="binding site" evidence="1">
    <location>
        <position position="161"/>
    </location>
    <ligand>
        <name>Mo-molybdopterin</name>
        <dbReference type="ChEBI" id="CHEBI:71302"/>
    </ligand>
</feature>
<feature type="binding site" evidence="1">
    <location>
        <position position="211"/>
    </location>
    <ligand>
        <name>Mo-molybdopterin</name>
        <dbReference type="ChEBI" id="CHEBI:71302"/>
    </ligand>
</feature>
<feature type="binding site" evidence="1">
    <location>
        <position position="216"/>
    </location>
    <ligand>
        <name>Mo-molybdopterin</name>
        <dbReference type="ChEBI" id="CHEBI:71302"/>
    </ligand>
</feature>
<feature type="binding site" evidence="1">
    <location>
        <begin position="227"/>
        <end position="229"/>
    </location>
    <ligand>
        <name>Mo-molybdopterin</name>
        <dbReference type="ChEBI" id="CHEBI:71302"/>
    </ligand>
</feature>
<organism>
    <name type="scientific">Gluconobacter oxydans (strain 621H)</name>
    <name type="common">Gluconobacter suboxydans</name>
    <dbReference type="NCBI Taxonomy" id="290633"/>
    <lineage>
        <taxon>Bacteria</taxon>
        <taxon>Pseudomonadati</taxon>
        <taxon>Pseudomonadota</taxon>
        <taxon>Alphaproteobacteria</taxon>
        <taxon>Acetobacterales</taxon>
        <taxon>Acetobacteraceae</taxon>
        <taxon>Gluconobacter</taxon>
    </lineage>
</organism>
<comment type="function">
    <text evidence="1">Part of the MsrPQ system that repairs oxidized periplasmic proteins containing methionine sulfoxide residues (Met-O), using respiratory chain electrons. Thus protects these proteins from oxidative-stress damage caused by reactive species of oxygen and chlorine generated by the host defense mechanisms. MsrPQ is essential for the maintenance of envelope integrity under bleach stress, rescuing a wide series of structurally unrelated periplasmic proteins from methionine oxidation. The catalytic subunit MsrP is non-stereospecific, being able to reduce both (R-) and (S-) diastereoisomers of methionine sulfoxide.</text>
</comment>
<comment type="catalytic activity">
    <reaction evidence="1">
        <text>L-methionyl-[protein] + a quinone + H2O = L-methionyl-(S)-S-oxide-[protein] + a quinol</text>
        <dbReference type="Rhea" id="RHEA:51292"/>
        <dbReference type="Rhea" id="RHEA-COMP:12313"/>
        <dbReference type="Rhea" id="RHEA-COMP:12315"/>
        <dbReference type="ChEBI" id="CHEBI:15377"/>
        <dbReference type="ChEBI" id="CHEBI:16044"/>
        <dbReference type="ChEBI" id="CHEBI:24646"/>
        <dbReference type="ChEBI" id="CHEBI:44120"/>
        <dbReference type="ChEBI" id="CHEBI:132124"/>
    </reaction>
</comment>
<comment type="catalytic activity">
    <reaction evidence="1">
        <text>L-methionyl-[protein] + a quinone + H2O = L-methionyl-(R)-S-oxide-[protein] + a quinol</text>
        <dbReference type="Rhea" id="RHEA:51296"/>
        <dbReference type="Rhea" id="RHEA-COMP:12313"/>
        <dbReference type="Rhea" id="RHEA-COMP:12314"/>
        <dbReference type="ChEBI" id="CHEBI:15377"/>
        <dbReference type="ChEBI" id="CHEBI:16044"/>
        <dbReference type="ChEBI" id="CHEBI:24646"/>
        <dbReference type="ChEBI" id="CHEBI:45764"/>
        <dbReference type="ChEBI" id="CHEBI:132124"/>
    </reaction>
</comment>
<comment type="cofactor">
    <cofactor evidence="1">
        <name>Mo-molybdopterin</name>
        <dbReference type="ChEBI" id="CHEBI:71302"/>
    </cofactor>
    <text evidence="1">Binds 1 Mo-molybdopterin (Mo-MPT) cofactor per subunit.</text>
</comment>
<comment type="subunit">
    <text evidence="1">Heterodimer of a catalytic subunit (MsrP) and a heme-binding subunit (MsrQ).</text>
</comment>
<comment type="subcellular location">
    <subcellularLocation>
        <location evidence="1">Periplasm</location>
    </subcellularLocation>
    <text evidence="1">Is attached to the inner membrane when interacting with the MsrQ subunit.</text>
</comment>
<comment type="PTM">
    <text evidence="1">Predicted to be exported by the Tat system. The position of the signal peptide cleavage has not been experimentally proven.</text>
</comment>
<comment type="similarity">
    <text evidence="1">Belongs to the MsrP family.</text>
</comment>
<evidence type="ECO:0000255" key="1">
    <source>
        <dbReference type="HAMAP-Rule" id="MF_01206"/>
    </source>
</evidence>
<dbReference type="EC" id="1.8.5.-" evidence="1"/>
<dbReference type="EMBL" id="CP000009">
    <property type="protein sequence ID" value="AAW61541.1"/>
    <property type="molecule type" value="Genomic_DNA"/>
</dbReference>
<dbReference type="RefSeq" id="WP_011253322.1">
    <property type="nucleotide sequence ID" value="NC_006677.1"/>
</dbReference>
<dbReference type="SMR" id="Q5FQ05"/>
<dbReference type="STRING" id="290633.GOX1802"/>
<dbReference type="KEGG" id="gox:GOX1802"/>
<dbReference type="eggNOG" id="COG2041">
    <property type="taxonomic scope" value="Bacteria"/>
</dbReference>
<dbReference type="HOGENOM" id="CLU_045520_0_0_5"/>
<dbReference type="Proteomes" id="UP000006375">
    <property type="component" value="Chromosome"/>
</dbReference>
<dbReference type="GO" id="GO:0042597">
    <property type="term" value="C:periplasmic space"/>
    <property type="evidence" value="ECO:0007669"/>
    <property type="project" value="UniProtKB-SubCell"/>
</dbReference>
<dbReference type="GO" id="GO:0046872">
    <property type="term" value="F:metal ion binding"/>
    <property type="evidence" value="ECO:0007669"/>
    <property type="project" value="UniProtKB-KW"/>
</dbReference>
<dbReference type="GO" id="GO:0043546">
    <property type="term" value="F:molybdopterin cofactor binding"/>
    <property type="evidence" value="ECO:0007669"/>
    <property type="project" value="UniProtKB-UniRule"/>
</dbReference>
<dbReference type="GO" id="GO:0016672">
    <property type="term" value="F:oxidoreductase activity, acting on a sulfur group of donors, quinone or similar compound as acceptor"/>
    <property type="evidence" value="ECO:0007669"/>
    <property type="project" value="UniProtKB-UniRule"/>
</dbReference>
<dbReference type="GO" id="GO:0030091">
    <property type="term" value="P:protein repair"/>
    <property type="evidence" value="ECO:0007669"/>
    <property type="project" value="UniProtKB-UniRule"/>
</dbReference>
<dbReference type="Gene3D" id="3.90.420.10">
    <property type="entry name" value="Oxidoreductase, molybdopterin-binding domain"/>
    <property type="match status" value="1"/>
</dbReference>
<dbReference type="HAMAP" id="MF_01206">
    <property type="entry name" value="MsrP"/>
    <property type="match status" value="1"/>
</dbReference>
<dbReference type="InterPro" id="IPR022867">
    <property type="entry name" value="MsrP"/>
</dbReference>
<dbReference type="InterPro" id="IPR000572">
    <property type="entry name" value="OxRdtase_Mopterin-bd_dom"/>
</dbReference>
<dbReference type="InterPro" id="IPR036374">
    <property type="entry name" value="OxRdtase_Mopterin-bd_sf"/>
</dbReference>
<dbReference type="InterPro" id="IPR006311">
    <property type="entry name" value="TAT_signal"/>
</dbReference>
<dbReference type="NCBIfam" id="NF003767">
    <property type="entry name" value="PRK05363.1"/>
    <property type="match status" value="1"/>
</dbReference>
<dbReference type="PANTHER" id="PTHR43032">
    <property type="entry name" value="PROTEIN-METHIONINE-SULFOXIDE REDUCTASE"/>
    <property type="match status" value="1"/>
</dbReference>
<dbReference type="PANTHER" id="PTHR43032:SF3">
    <property type="entry name" value="PROTEIN-METHIONINE-SULFOXIDE REDUCTASE CATALYTIC SUBUNIT MSRP"/>
    <property type="match status" value="1"/>
</dbReference>
<dbReference type="Pfam" id="PF00174">
    <property type="entry name" value="Oxidored_molyb"/>
    <property type="match status" value="1"/>
</dbReference>
<dbReference type="SUPFAM" id="SSF56524">
    <property type="entry name" value="Oxidoreductase molybdopterin-binding domain"/>
    <property type="match status" value="1"/>
</dbReference>
<dbReference type="PROSITE" id="PS51318">
    <property type="entry name" value="TAT"/>
    <property type="match status" value="1"/>
</dbReference>
<accession>Q5FQ05</accession>
<name>MSRP_GLUOX</name>
<sequence>MALFRYPRPLPSEITPRDMYLSRRSLIGGAAALGAVSATADAATLQTHPGPYSGNLTPTPHEDVTHYNNFYEFGMGKADPATQSQTFHPLPWTLEITGLVRKPVRLDVEQLLRSPAIEERIYRMRCVEAWSMVIPWDGIPLATLLKDADPDPHATHVAFESIVRPAEMPGQTEALSGIQWPYVEGLRLDEAMNPLTLLALGIYGETLPNQNGAPLRLVVPWKYGFKGIKSIQRIRLLDHEPPTTWNRLAPDEYGFYANVNPQVDHPRWSQATERVIGARSLFGATRQPTLMFNGYGEQVADLYRGMDLRKNF</sequence>
<gene>
    <name evidence="1" type="primary">msrP</name>
    <name type="ordered locus">GOX1802</name>
</gene>
<reference key="1">
    <citation type="journal article" date="2005" name="Nat. Biotechnol.">
        <title>Complete genome sequence of the acetic acid bacterium Gluconobacter oxydans.</title>
        <authorList>
            <person name="Prust C."/>
            <person name="Hoffmeister M."/>
            <person name="Liesegang H."/>
            <person name="Wiezer A."/>
            <person name="Fricke W.F."/>
            <person name="Ehrenreich A."/>
            <person name="Gottschalk G."/>
            <person name="Deppenmeier U."/>
        </authorList>
    </citation>
    <scope>NUCLEOTIDE SEQUENCE [LARGE SCALE GENOMIC DNA]</scope>
    <source>
        <strain>621H</strain>
    </source>
</reference>
<keyword id="KW-0479">Metal-binding</keyword>
<keyword id="KW-0500">Molybdenum</keyword>
<keyword id="KW-0560">Oxidoreductase</keyword>
<keyword id="KW-0574">Periplasm</keyword>
<keyword id="KW-1185">Reference proteome</keyword>
<keyword id="KW-0732">Signal</keyword>